<gene>
    <name type="primary">unc50-b</name>
</gene>
<protein>
    <recommendedName>
        <fullName>Protein unc-50 homolog B</fullName>
    </recommendedName>
</protein>
<organism>
    <name type="scientific">Xenopus laevis</name>
    <name type="common">African clawed frog</name>
    <dbReference type="NCBI Taxonomy" id="8355"/>
    <lineage>
        <taxon>Eukaryota</taxon>
        <taxon>Metazoa</taxon>
        <taxon>Chordata</taxon>
        <taxon>Craniata</taxon>
        <taxon>Vertebrata</taxon>
        <taxon>Euteleostomi</taxon>
        <taxon>Amphibia</taxon>
        <taxon>Batrachia</taxon>
        <taxon>Anura</taxon>
        <taxon>Pipoidea</taxon>
        <taxon>Pipidae</taxon>
        <taxon>Xenopodinae</taxon>
        <taxon>Xenopus</taxon>
        <taxon>Xenopus</taxon>
    </lineage>
</organism>
<proteinExistence type="evidence at transcript level"/>
<keyword id="KW-0333">Golgi apparatus</keyword>
<keyword id="KW-0472">Membrane</keyword>
<keyword id="KW-0539">Nucleus</keyword>
<keyword id="KW-1185">Reference proteome</keyword>
<keyword id="KW-0694">RNA-binding</keyword>
<keyword id="KW-0812">Transmembrane</keyword>
<keyword id="KW-1133">Transmembrane helix</keyword>
<comment type="function">
    <text evidence="1">Involved in the cell surface expression of neuronal nicotinic receptors (By similarity). Binds RNA (By similarity).</text>
</comment>
<comment type="subcellular location">
    <subcellularLocation>
        <location evidence="1">Nucleus inner membrane</location>
        <topology evidence="1">Multi-pass membrane protein</topology>
    </subcellularLocation>
    <subcellularLocation>
        <location evidence="2">Golgi apparatus membrane</location>
        <topology evidence="2">Multi-pass membrane protein</topology>
    </subcellularLocation>
</comment>
<comment type="similarity">
    <text evidence="5">Belongs to the unc-50 family.</text>
</comment>
<sequence>MLPTTSVSPRSPDNGILSPRDATRHTAGAKRYKYLRRLFHFKQMDFEFALWQMLYLFTSPQKVYRNFHYRKQTKDQWARDDPAFLVLLGIWLCVSTVGFGFVLDMSFFETFTLLLWVVFIDCVGVGLLIATSMWFVSNKYMVNRQGKDYDVEWGYTFDVHLNAFYPLLVILHFIQLFFINHVILTGWFIGCFVGNTLWLIAIGYYIYITFLGYSALPFLKNTVVLLYPFAALALLYILSLALGWNFTAKLCLFYKYRVR</sequence>
<name>UN50B_XENLA</name>
<feature type="chain" id="PRO_0000308966" description="Protein unc-50 homolog B">
    <location>
        <begin position="1"/>
        <end position="259"/>
    </location>
</feature>
<feature type="topological domain" description="Cytoplasmic" evidence="3">
    <location>
        <begin position="1"/>
        <end position="82"/>
    </location>
</feature>
<feature type="transmembrane region" description="Helical" evidence="3">
    <location>
        <begin position="83"/>
        <end position="103"/>
    </location>
</feature>
<feature type="topological domain" description="Lumenal" evidence="3">
    <location>
        <begin position="104"/>
        <end position="109"/>
    </location>
</feature>
<feature type="transmembrane region" description="Helical" evidence="3">
    <location>
        <begin position="110"/>
        <end position="130"/>
    </location>
</feature>
<feature type="topological domain" description="Cytoplasmic" evidence="3">
    <location>
        <begin position="131"/>
        <end position="158"/>
    </location>
</feature>
<feature type="transmembrane region" description="Helical" evidence="3">
    <location>
        <begin position="159"/>
        <end position="179"/>
    </location>
</feature>
<feature type="topological domain" description="Lumenal" evidence="3">
    <location>
        <begin position="180"/>
        <end position="181"/>
    </location>
</feature>
<feature type="transmembrane region" description="Helical" evidence="3">
    <location>
        <begin position="182"/>
        <end position="202"/>
    </location>
</feature>
<feature type="topological domain" description="Cytoplasmic" evidence="3">
    <location>
        <begin position="203"/>
        <end position="222"/>
    </location>
</feature>
<feature type="transmembrane region" description="Helical" evidence="3">
    <location>
        <begin position="223"/>
        <end position="243"/>
    </location>
</feature>
<feature type="topological domain" description="Lumenal" evidence="3">
    <location>
        <begin position="244"/>
        <end position="259"/>
    </location>
</feature>
<feature type="region of interest" description="Disordered" evidence="4">
    <location>
        <begin position="1"/>
        <end position="21"/>
    </location>
</feature>
<feature type="compositionally biased region" description="Polar residues" evidence="4">
    <location>
        <begin position="1"/>
        <end position="11"/>
    </location>
</feature>
<accession>Q5U520</accession>
<reference key="1">
    <citation type="submission" date="2004-10" db="EMBL/GenBank/DDBJ databases">
        <authorList>
            <consortium name="NIH - Xenopus Gene Collection (XGC) project"/>
        </authorList>
    </citation>
    <scope>NUCLEOTIDE SEQUENCE [LARGE SCALE MRNA]</scope>
</reference>
<evidence type="ECO:0000250" key="1">
    <source>
        <dbReference type="UniProtKB" id="O55227"/>
    </source>
</evidence>
<evidence type="ECO:0000250" key="2">
    <source>
        <dbReference type="UniProtKB" id="Q53HI1"/>
    </source>
</evidence>
<evidence type="ECO:0000255" key="3"/>
<evidence type="ECO:0000256" key="4">
    <source>
        <dbReference type="SAM" id="MobiDB-lite"/>
    </source>
</evidence>
<evidence type="ECO:0000305" key="5"/>
<dbReference type="EMBL" id="BC084865">
    <property type="protein sequence ID" value="AAH84865.1"/>
    <property type="molecule type" value="mRNA"/>
</dbReference>
<dbReference type="RefSeq" id="NP_001088522.1">
    <property type="nucleotide sequence ID" value="NM_001095053.2"/>
</dbReference>
<dbReference type="RefSeq" id="XP_018103913.1">
    <property type="nucleotide sequence ID" value="XM_018248424.1"/>
</dbReference>
<dbReference type="DNASU" id="495394"/>
<dbReference type="GeneID" id="495394"/>
<dbReference type="KEGG" id="xla:495394"/>
<dbReference type="AGR" id="Xenbase:XB-GENE-6253952"/>
<dbReference type="CTD" id="495394"/>
<dbReference type="Xenbase" id="XB-GENE-6253952">
    <property type="gene designation" value="unc50.S"/>
</dbReference>
<dbReference type="OMA" id="ETAIWEM"/>
<dbReference type="OrthoDB" id="10027013at2759"/>
<dbReference type="Proteomes" id="UP000186698">
    <property type="component" value="Chromosome 2S"/>
</dbReference>
<dbReference type="Bgee" id="495394">
    <property type="expression patterns" value="Expressed in oocyte and 19 other cell types or tissues"/>
</dbReference>
<dbReference type="GO" id="GO:0000139">
    <property type="term" value="C:Golgi membrane"/>
    <property type="evidence" value="ECO:0000318"/>
    <property type="project" value="GO_Central"/>
</dbReference>
<dbReference type="GO" id="GO:0005637">
    <property type="term" value="C:nuclear inner membrane"/>
    <property type="evidence" value="ECO:0000250"/>
    <property type="project" value="UniProtKB"/>
</dbReference>
<dbReference type="GO" id="GO:0003723">
    <property type="term" value="F:RNA binding"/>
    <property type="evidence" value="ECO:0000250"/>
    <property type="project" value="UniProtKB"/>
</dbReference>
<dbReference type="GO" id="GO:0034394">
    <property type="term" value="P:protein localization to cell surface"/>
    <property type="evidence" value="ECO:0000250"/>
    <property type="project" value="UniProtKB"/>
</dbReference>
<dbReference type="InterPro" id="IPR007881">
    <property type="entry name" value="UNC-50"/>
</dbReference>
<dbReference type="PANTHER" id="PTHR12841">
    <property type="entry name" value="PROTEIN UNC-50 HOMOLOG"/>
    <property type="match status" value="1"/>
</dbReference>
<dbReference type="PANTHER" id="PTHR12841:SF6">
    <property type="entry name" value="PROTEIN UNC-50 HOMOLOG"/>
    <property type="match status" value="1"/>
</dbReference>
<dbReference type="Pfam" id="PF05216">
    <property type="entry name" value="UNC-50"/>
    <property type="match status" value="1"/>
</dbReference>